<organism>
    <name type="scientific">Mus musculus</name>
    <name type="common">Mouse</name>
    <dbReference type="NCBI Taxonomy" id="10090"/>
    <lineage>
        <taxon>Eukaryota</taxon>
        <taxon>Metazoa</taxon>
        <taxon>Chordata</taxon>
        <taxon>Craniata</taxon>
        <taxon>Vertebrata</taxon>
        <taxon>Euteleostomi</taxon>
        <taxon>Mammalia</taxon>
        <taxon>Eutheria</taxon>
        <taxon>Euarchontoglires</taxon>
        <taxon>Glires</taxon>
        <taxon>Rodentia</taxon>
        <taxon>Myomorpha</taxon>
        <taxon>Muroidea</taxon>
        <taxon>Muridae</taxon>
        <taxon>Murinae</taxon>
        <taxon>Mus</taxon>
        <taxon>Mus</taxon>
    </lineage>
</organism>
<name>HLF_MOUSE</name>
<gene>
    <name type="primary">Hlf</name>
</gene>
<comment type="subunit">
    <text evidence="1">Binds DNA specifically as homodimer or heterodimer with other PAR factors.</text>
</comment>
<comment type="subcellular location">
    <subcellularLocation>
        <location evidence="4">Nucleus</location>
    </subcellularLocation>
</comment>
<comment type="induction">
    <text>Accumulates according to a robust circadian rhythm. Displays only a moderate amplitude in the liver (1.6-fold) and none in the brain.</text>
</comment>
<comment type="miscellaneous">
    <text>Mice deficient for all three PAR bZIP proteins (DBP, HLF and TEF) display a dramatically shortened life span and are highly susceptible to generalized spontaneous and audiogenic epilepsies (due for example to the noise of a vacuum cleaner) that are frequently lethal. The down-regulation of pyridoxal kinase (Pdxk) expression in these mice may participate in this seizure phenotype.</text>
</comment>
<comment type="similarity">
    <text evidence="4">Belongs to the bZIP family. PAR subfamily.</text>
</comment>
<comment type="sequence caution" evidence="4">
    <conflict type="erroneous initiation">
        <sequence resource="EMBL-CDS" id="AAH57693"/>
    </conflict>
</comment>
<feature type="chain" id="PRO_0000076511" description="Hepatic leukemia factor">
    <location>
        <begin position="1"/>
        <end position="295"/>
    </location>
</feature>
<feature type="domain" description="bZIP" evidence="2">
    <location>
        <begin position="225"/>
        <end position="288"/>
    </location>
</feature>
<feature type="region of interest" description="Disordered" evidence="3">
    <location>
        <begin position="36"/>
        <end position="76"/>
    </location>
</feature>
<feature type="region of interest" description="Disordered" evidence="3">
    <location>
        <begin position="92"/>
        <end position="149"/>
    </location>
</feature>
<feature type="region of interest" description="Basic motif" evidence="2">
    <location>
        <begin position="227"/>
        <end position="247"/>
    </location>
</feature>
<feature type="region of interest" description="Leucine-zipper" evidence="2">
    <location>
        <begin position="248"/>
        <end position="255"/>
    </location>
</feature>
<feature type="compositionally biased region" description="Basic and acidic residues" evidence="3">
    <location>
        <begin position="36"/>
        <end position="52"/>
    </location>
</feature>
<feature type="sequence conflict" description="In Ref. 2; AAH57693." evidence="4" ref="2">
    <original>ENPLKLPLHPED</original>
    <variation>KKQSSPFPFSSS</variation>
    <location>
        <begin position="27"/>
        <end position="38"/>
    </location>
</feature>
<feature type="sequence conflict" description="In Ref. 2; AAH57693." evidence="4" ref="2">
    <original>K</original>
    <variation>KQ</variation>
    <location>
        <position position="224"/>
    </location>
</feature>
<protein>
    <recommendedName>
        <fullName>Hepatic leukemia factor</fullName>
    </recommendedName>
</protein>
<proteinExistence type="evidence at transcript level"/>
<keyword id="KW-0090">Biological rhythms</keyword>
<keyword id="KW-0238">DNA-binding</keyword>
<keyword id="KW-0539">Nucleus</keyword>
<keyword id="KW-1185">Reference proteome</keyword>
<keyword id="KW-0804">Transcription</keyword>
<keyword id="KW-0805">Transcription regulation</keyword>
<sequence>MEKMSRQLPLNPTFIPPPYGVLRSLLENPLKLPLHPEDAFSKEKDKGKKLDDESSSPTVPQSAFLGPTLWDKTLPYDGDTFQLEYMDLEEFLSENGIPPSPSQHDHSPHPPGLQPASSTAPSVMDLSSRATAPLHPGIPSPNCMQSPIRPGQLLPANRNTPSPIDPDTIQVPVGYEPDPADLALSSIPGQEMFDPRKRKFSEEELKPQPMIKKARKVFIPDDLKDDKYWARRRKNNMAAKRSRDARRLKENQIAIRASFLEKENSALRQEVADLRKELGKCKNILAKYEARHGPL</sequence>
<evidence type="ECO:0000250" key="1"/>
<evidence type="ECO:0000255" key="2">
    <source>
        <dbReference type="PROSITE-ProRule" id="PRU00978"/>
    </source>
</evidence>
<evidence type="ECO:0000256" key="3">
    <source>
        <dbReference type="SAM" id="MobiDB-lite"/>
    </source>
</evidence>
<evidence type="ECO:0000305" key="4"/>
<reference key="1">
    <citation type="journal article" date="2005" name="Science">
        <title>The transcriptional landscape of the mammalian genome.</title>
        <authorList>
            <person name="Carninci P."/>
            <person name="Kasukawa T."/>
            <person name="Katayama S."/>
            <person name="Gough J."/>
            <person name="Frith M.C."/>
            <person name="Maeda N."/>
            <person name="Oyama R."/>
            <person name="Ravasi T."/>
            <person name="Lenhard B."/>
            <person name="Wells C."/>
            <person name="Kodzius R."/>
            <person name="Shimokawa K."/>
            <person name="Bajic V.B."/>
            <person name="Brenner S.E."/>
            <person name="Batalov S."/>
            <person name="Forrest A.R."/>
            <person name="Zavolan M."/>
            <person name="Davis M.J."/>
            <person name="Wilming L.G."/>
            <person name="Aidinis V."/>
            <person name="Allen J.E."/>
            <person name="Ambesi-Impiombato A."/>
            <person name="Apweiler R."/>
            <person name="Aturaliya R.N."/>
            <person name="Bailey T.L."/>
            <person name="Bansal M."/>
            <person name="Baxter L."/>
            <person name="Beisel K.W."/>
            <person name="Bersano T."/>
            <person name="Bono H."/>
            <person name="Chalk A.M."/>
            <person name="Chiu K.P."/>
            <person name="Choudhary V."/>
            <person name="Christoffels A."/>
            <person name="Clutterbuck D.R."/>
            <person name="Crowe M.L."/>
            <person name="Dalla E."/>
            <person name="Dalrymple B.P."/>
            <person name="de Bono B."/>
            <person name="Della Gatta G."/>
            <person name="di Bernardo D."/>
            <person name="Down T."/>
            <person name="Engstrom P."/>
            <person name="Fagiolini M."/>
            <person name="Faulkner G."/>
            <person name="Fletcher C.F."/>
            <person name="Fukushima T."/>
            <person name="Furuno M."/>
            <person name="Futaki S."/>
            <person name="Gariboldi M."/>
            <person name="Georgii-Hemming P."/>
            <person name="Gingeras T.R."/>
            <person name="Gojobori T."/>
            <person name="Green R.E."/>
            <person name="Gustincich S."/>
            <person name="Harbers M."/>
            <person name="Hayashi Y."/>
            <person name="Hensch T.K."/>
            <person name="Hirokawa N."/>
            <person name="Hill D."/>
            <person name="Huminiecki L."/>
            <person name="Iacono M."/>
            <person name="Ikeo K."/>
            <person name="Iwama A."/>
            <person name="Ishikawa T."/>
            <person name="Jakt M."/>
            <person name="Kanapin A."/>
            <person name="Katoh M."/>
            <person name="Kawasawa Y."/>
            <person name="Kelso J."/>
            <person name="Kitamura H."/>
            <person name="Kitano H."/>
            <person name="Kollias G."/>
            <person name="Krishnan S.P."/>
            <person name="Kruger A."/>
            <person name="Kummerfeld S.K."/>
            <person name="Kurochkin I.V."/>
            <person name="Lareau L.F."/>
            <person name="Lazarevic D."/>
            <person name="Lipovich L."/>
            <person name="Liu J."/>
            <person name="Liuni S."/>
            <person name="McWilliam S."/>
            <person name="Madan Babu M."/>
            <person name="Madera M."/>
            <person name="Marchionni L."/>
            <person name="Matsuda H."/>
            <person name="Matsuzawa S."/>
            <person name="Miki H."/>
            <person name="Mignone F."/>
            <person name="Miyake S."/>
            <person name="Morris K."/>
            <person name="Mottagui-Tabar S."/>
            <person name="Mulder N."/>
            <person name="Nakano N."/>
            <person name="Nakauchi H."/>
            <person name="Ng P."/>
            <person name="Nilsson R."/>
            <person name="Nishiguchi S."/>
            <person name="Nishikawa S."/>
            <person name="Nori F."/>
            <person name="Ohara O."/>
            <person name="Okazaki Y."/>
            <person name="Orlando V."/>
            <person name="Pang K.C."/>
            <person name="Pavan W.J."/>
            <person name="Pavesi G."/>
            <person name="Pesole G."/>
            <person name="Petrovsky N."/>
            <person name="Piazza S."/>
            <person name="Reed J."/>
            <person name="Reid J.F."/>
            <person name="Ring B.Z."/>
            <person name="Ringwald M."/>
            <person name="Rost B."/>
            <person name="Ruan Y."/>
            <person name="Salzberg S.L."/>
            <person name="Sandelin A."/>
            <person name="Schneider C."/>
            <person name="Schoenbach C."/>
            <person name="Sekiguchi K."/>
            <person name="Semple C.A."/>
            <person name="Seno S."/>
            <person name="Sessa L."/>
            <person name="Sheng Y."/>
            <person name="Shibata Y."/>
            <person name="Shimada H."/>
            <person name="Shimada K."/>
            <person name="Silva D."/>
            <person name="Sinclair B."/>
            <person name="Sperling S."/>
            <person name="Stupka E."/>
            <person name="Sugiura K."/>
            <person name="Sultana R."/>
            <person name="Takenaka Y."/>
            <person name="Taki K."/>
            <person name="Tammoja K."/>
            <person name="Tan S.L."/>
            <person name="Tang S."/>
            <person name="Taylor M.S."/>
            <person name="Tegner J."/>
            <person name="Teichmann S.A."/>
            <person name="Ueda H.R."/>
            <person name="van Nimwegen E."/>
            <person name="Verardo R."/>
            <person name="Wei C.L."/>
            <person name="Yagi K."/>
            <person name="Yamanishi H."/>
            <person name="Zabarovsky E."/>
            <person name="Zhu S."/>
            <person name="Zimmer A."/>
            <person name="Hide W."/>
            <person name="Bult C."/>
            <person name="Grimmond S.M."/>
            <person name="Teasdale R.D."/>
            <person name="Liu E.T."/>
            <person name="Brusic V."/>
            <person name="Quackenbush J."/>
            <person name="Wahlestedt C."/>
            <person name="Mattick J.S."/>
            <person name="Hume D.A."/>
            <person name="Kai C."/>
            <person name="Sasaki D."/>
            <person name="Tomaru Y."/>
            <person name="Fukuda S."/>
            <person name="Kanamori-Katayama M."/>
            <person name="Suzuki M."/>
            <person name="Aoki J."/>
            <person name="Arakawa T."/>
            <person name="Iida J."/>
            <person name="Imamura K."/>
            <person name="Itoh M."/>
            <person name="Kato T."/>
            <person name="Kawaji H."/>
            <person name="Kawagashira N."/>
            <person name="Kawashima T."/>
            <person name="Kojima M."/>
            <person name="Kondo S."/>
            <person name="Konno H."/>
            <person name="Nakano K."/>
            <person name="Ninomiya N."/>
            <person name="Nishio T."/>
            <person name="Okada M."/>
            <person name="Plessy C."/>
            <person name="Shibata K."/>
            <person name="Shiraki T."/>
            <person name="Suzuki S."/>
            <person name="Tagami M."/>
            <person name="Waki K."/>
            <person name="Watahiki A."/>
            <person name="Okamura-Oho Y."/>
            <person name="Suzuki H."/>
            <person name="Kawai J."/>
            <person name="Hayashizaki Y."/>
        </authorList>
    </citation>
    <scope>NUCLEOTIDE SEQUENCE [LARGE SCALE MRNA]</scope>
    <source>
        <strain>C57BL/6J</strain>
        <tissue>Diencephalon</tissue>
        <tissue>Oviduct</tissue>
    </source>
</reference>
<reference key="2">
    <citation type="journal article" date="2004" name="Genome Res.">
        <title>The status, quality, and expansion of the NIH full-length cDNA project: the Mammalian Gene Collection (MGC).</title>
        <authorList>
            <consortium name="The MGC Project Team"/>
        </authorList>
    </citation>
    <scope>NUCLEOTIDE SEQUENCE [LARGE SCALE MRNA]</scope>
    <source>
        <strain>C57BL/6J</strain>
        <tissue>Brain</tissue>
        <tissue>Liver</tissue>
    </source>
</reference>
<reference key="3">
    <citation type="journal article" date="2004" name="Genes Dev.">
        <title>The loss of circadian PAR bZip transcription factors results in epilepsy.</title>
        <authorList>
            <person name="Gachon F."/>
            <person name="Fonjallaz P."/>
            <person name="Damiola F."/>
            <person name="Gos P."/>
            <person name="Kodama T."/>
            <person name="Zakany J."/>
            <person name="Duboule D."/>
            <person name="Petit B."/>
            <person name="Tafti M."/>
            <person name="Schibler U."/>
        </authorList>
    </citation>
    <scope>INVOLVEMENT IN EPILEPSY</scope>
</reference>
<dbReference type="EMBL" id="AK054062">
    <property type="protein sequence ID" value="BAC35642.1"/>
    <property type="molecule type" value="mRNA"/>
</dbReference>
<dbReference type="EMBL" id="BC057693">
    <property type="protein sequence ID" value="AAH57693.1"/>
    <property type="status" value="ALT_INIT"/>
    <property type="molecule type" value="mRNA"/>
</dbReference>
<dbReference type="EMBL" id="BC058705">
    <property type="protein sequence ID" value="AAH58705.1"/>
    <property type="molecule type" value="mRNA"/>
</dbReference>
<dbReference type="CCDS" id="CCDS25241.1"/>
<dbReference type="RefSeq" id="NP_766151.1">
    <property type="nucleotide sequence ID" value="NM_172563.4"/>
</dbReference>
<dbReference type="RefSeq" id="XP_006533068.1">
    <property type="nucleotide sequence ID" value="XM_006533005.3"/>
</dbReference>
<dbReference type="RefSeq" id="XP_006533069.1">
    <property type="nucleotide sequence ID" value="XM_006533006.1"/>
</dbReference>
<dbReference type="SMR" id="Q8BW74"/>
<dbReference type="BioGRID" id="229842">
    <property type="interactions" value="8"/>
</dbReference>
<dbReference type="FunCoup" id="Q8BW74">
    <property type="interactions" value="3376"/>
</dbReference>
<dbReference type="IntAct" id="Q8BW74">
    <property type="interactions" value="5"/>
</dbReference>
<dbReference type="STRING" id="10090.ENSMUSP00000004051"/>
<dbReference type="CarbonylDB" id="Q8BW74"/>
<dbReference type="iPTMnet" id="Q8BW74"/>
<dbReference type="PhosphoSitePlus" id="Q8BW74"/>
<dbReference type="PaxDb" id="10090-ENSMUSP00000004051"/>
<dbReference type="ProteomicsDB" id="273147"/>
<dbReference type="Antibodypedia" id="30848">
    <property type="antibodies" value="183 antibodies from 27 providers"/>
</dbReference>
<dbReference type="DNASU" id="217082"/>
<dbReference type="Ensembl" id="ENSMUST00000004051.8">
    <property type="protein sequence ID" value="ENSMUSP00000004051.8"/>
    <property type="gene ID" value="ENSMUSG00000003949.17"/>
</dbReference>
<dbReference type="GeneID" id="217082"/>
<dbReference type="KEGG" id="mmu:217082"/>
<dbReference type="UCSC" id="uc007kwr.1">
    <property type="organism name" value="mouse"/>
</dbReference>
<dbReference type="AGR" id="MGI:96108"/>
<dbReference type="CTD" id="3131"/>
<dbReference type="MGI" id="MGI:96108">
    <property type="gene designation" value="Hlf"/>
</dbReference>
<dbReference type="VEuPathDB" id="HostDB:ENSMUSG00000003949"/>
<dbReference type="eggNOG" id="KOG3119">
    <property type="taxonomic scope" value="Eukaryota"/>
</dbReference>
<dbReference type="GeneTree" id="ENSGT00940000156555"/>
<dbReference type="HOGENOM" id="CLU_051922_2_0_1"/>
<dbReference type="InParanoid" id="Q8BW74"/>
<dbReference type="OMA" id="YDADNFQ"/>
<dbReference type="OrthoDB" id="6022300at2759"/>
<dbReference type="PhylomeDB" id="Q8BW74"/>
<dbReference type="TreeFam" id="TF315869"/>
<dbReference type="BioGRID-ORCS" id="217082">
    <property type="hits" value="1 hit in 79 CRISPR screens"/>
</dbReference>
<dbReference type="ChiTaRS" id="Hlf">
    <property type="organism name" value="mouse"/>
</dbReference>
<dbReference type="PRO" id="PR:Q8BW74"/>
<dbReference type="Proteomes" id="UP000000589">
    <property type="component" value="Chromosome 11"/>
</dbReference>
<dbReference type="RNAct" id="Q8BW74">
    <property type="molecule type" value="protein"/>
</dbReference>
<dbReference type="Bgee" id="ENSMUSG00000003949">
    <property type="expression patterns" value="Expressed in lateral geniculate body and 197 other cell types or tissues"/>
</dbReference>
<dbReference type="ExpressionAtlas" id="Q8BW74">
    <property type="expression patterns" value="baseline and differential"/>
</dbReference>
<dbReference type="GO" id="GO:0005654">
    <property type="term" value="C:nucleoplasm"/>
    <property type="evidence" value="ECO:0007669"/>
    <property type="project" value="Ensembl"/>
</dbReference>
<dbReference type="GO" id="GO:0090575">
    <property type="term" value="C:RNA polymerase II transcription regulator complex"/>
    <property type="evidence" value="ECO:0007669"/>
    <property type="project" value="Ensembl"/>
</dbReference>
<dbReference type="GO" id="GO:0001228">
    <property type="term" value="F:DNA-binding transcription activator activity, RNA polymerase II-specific"/>
    <property type="evidence" value="ECO:0007669"/>
    <property type="project" value="Ensembl"/>
</dbReference>
<dbReference type="GO" id="GO:1990837">
    <property type="term" value="F:sequence-specific double-stranded DNA binding"/>
    <property type="evidence" value="ECO:0007669"/>
    <property type="project" value="Ensembl"/>
</dbReference>
<dbReference type="GO" id="GO:0048511">
    <property type="term" value="P:rhythmic process"/>
    <property type="evidence" value="ECO:0007669"/>
    <property type="project" value="UniProtKB-KW"/>
</dbReference>
<dbReference type="GO" id="GO:0035914">
    <property type="term" value="P:skeletal muscle cell differentiation"/>
    <property type="evidence" value="ECO:0000315"/>
    <property type="project" value="MGI"/>
</dbReference>
<dbReference type="CDD" id="cd14695">
    <property type="entry name" value="bZIP_HLF"/>
    <property type="match status" value="1"/>
</dbReference>
<dbReference type="FunFam" id="1.20.5.170:FF:000007">
    <property type="entry name" value="hepatic leukemia factor isoform X2"/>
    <property type="match status" value="1"/>
</dbReference>
<dbReference type="Gene3D" id="1.20.5.170">
    <property type="match status" value="1"/>
</dbReference>
<dbReference type="InterPro" id="IPR004827">
    <property type="entry name" value="bZIP"/>
</dbReference>
<dbReference type="InterPro" id="IPR046347">
    <property type="entry name" value="bZIP_sf"/>
</dbReference>
<dbReference type="InterPro" id="IPR040223">
    <property type="entry name" value="PAR_bZIP"/>
</dbReference>
<dbReference type="PANTHER" id="PTHR11988:SF28">
    <property type="entry name" value="HEPATIC LEUKEMIA FACTOR"/>
    <property type="match status" value="1"/>
</dbReference>
<dbReference type="PANTHER" id="PTHR11988">
    <property type="entry name" value="THYROTROPH EMBRYONIC FACTOR RELATED"/>
    <property type="match status" value="1"/>
</dbReference>
<dbReference type="Pfam" id="PF07716">
    <property type="entry name" value="bZIP_2"/>
    <property type="match status" value="1"/>
</dbReference>
<dbReference type="SMART" id="SM00338">
    <property type="entry name" value="BRLZ"/>
    <property type="match status" value="1"/>
</dbReference>
<dbReference type="SUPFAM" id="SSF57959">
    <property type="entry name" value="Leucine zipper domain"/>
    <property type="match status" value="1"/>
</dbReference>
<dbReference type="PROSITE" id="PS50217">
    <property type="entry name" value="BZIP"/>
    <property type="match status" value="1"/>
</dbReference>
<accession>Q8BW74</accession>
<accession>Q6PF83</accession>